<evidence type="ECO:0000250" key="1"/>
<evidence type="ECO:0000255" key="2">
    <source>
        <dbReference type="PROSITE-ProRule" id="PRU00465"/>
    </source>
</evidence>
<evidence type="ECO:0000305" key="3"/>
<reference key="1">
    <citation type="journal article" date="2001" name="Nature">
        <title>Genome sequence of enterohaemorrhagic Escherichia coli O157:H7.</title>
        <authorList>
            <person name="Perna N.T."/>
            <person name="Plunkett G. III"/>
            <person name="Burland V."/>
            <person name="Mau B."/>
            <person name="Glasner J.D."/>
            <person name="Rose D.J."/>
            <person name="Mayhew G.F."/>
            <person name="Evans P.S."/>
            <person name="Gregor J."/>
            <person name="Kirkpatrick H.A."/>
            <person name="Posfai G."/>
            <person name="Hackett J."/>
            <person name="Klink S."/>
            <person name="Boutin A."/>
            <person name="Shao Y."/>
            <person name="Miller L."/>
            <person name="Grotbeck E.J."/>
            <person name="Davis N.W."/>
            <person name="Lim A."/>
            <person name="Dimalanta E.T."/>
            <person name="Potamousis K."/>
            <person name="Apodaca J."/>
            <person name="Anantharaman T.S."/>
            <person name="Lin J."/>
            <person name="Yen G."/>
            <person name="Schwartz D.C."/>
            <person name="Welch R.A."/>
            <person name="Blattner F.R."/>
        </authorList>
    </citation>
    <scope>NUCLEOTIDE SEQUENCE [LARGE SCALE GENOMIC DNA]</scope>
    <source>
        <strain>O157:H7 / EDL933 / ATCC 700927 / EHEC</strain>
    </source>
</reference>
<reference key="2">
    <citation type="journal article" date="2001" name="DNA Res.">
        <title>Complete genome sequence of enterohemorrhagic Escherichia coli O157:H7 and genomic comparison with a laboratory strain K-12.</title>
        <authorList>
            <person name="Hayashi T."/>
            <person name="Makino K."/>
            <person name="Ohnishi M."/>
            <person name="Kurokawa K."/>
            <person name="Ishii K."/>
            <person name="Yokoyama K."/>
            <person name="Han C.-G."/>
            <person name="Ohtsubo E."/>
            <person name="Nakayama K."/>
            <person name="Murata T."/>
            <person name="Tanaka M."/>
            <person name="Tobe T."/>
            <person name="Iida T."/>
            <person name="Takami H."/>
            <person name="Honda T."/>
            <person name="Sasakawa C."/>
            <person name="Ogasawara N."/>
            <person name="Yasunaga T."/>
            <person name="Kuhara S."/>
            <person name="Shiba T."/>
            <person name="Hattori M."/>
            <person name="Shinagawa H."/>
        </authorList>
    </citation>
    <scope>NUCLEOTIDE SEQUENCE [LARGE SCALE GENOMIC DNA]</scope>
    <source>
        <strain>O157:H7 / Sakai / RIMD 0509952 / EHEC</strain>
    </source>
</reference>
<comment type="function">
    <text evidence="1">Iron-sulfur subunit of the xanthine dehydrogenase complex.</text>
</comment>
<comment type="cofactor">
    <cofactor evidence="1">
        <name>[2Fe-2S] cluster</name>
        <dbReference type="ChEBI" id="CHEBI:190135"/>
    </cofactor>
    <text evidence="1">Binds 2 [2Fe-2S] clusters.</text>
</comment>
<comment type="pathway">
    <text>Purine metabolism; hypoxanthine degradation; urate from hypoxanthine: step 1/2.</text>
</comment>
<comment type="subunit">
    <text evidence="3">Heterotrimer of XdhA, XdhB and XdhC.</text>
</comment>
<keyword id="KW-0001">2Fe-2S</keyword>
<keyword id="KW-0408">Iron</keyword>
<keyword id="KW-0411">Iron-sulfur</keyword>
<keyword id="KW-0479">Metal-binding</keyword>
<keyword id="KW-0659">Purine metabolism</keyword>
<keyword id="KW-0660">Purine salvage</keyword>
<keyword id="KW-1185">Reference proteome</keyword>
<feature type="chain" id="PRO_0000189413" description="Xanthine dehydrogenase iron-sulfur-binding subunit">
    <location>
        <begin position="1"/>
        <end position="159"/>
    </location>
</feature>
<feature type="domain" description="2Fe-2S ferredoxin-type" evidence="2">
    <location>
        <begin position="7"/>
        <end position="82"/>
    </location>
</feature>
<feature type="binding site" evidence="2">
    <location>
        <position position="44"/>
    </location>
    <ligand>
        <name>[2Fe-2S] cluster</name>
        <dbReference type="ChEBI" id="CHEBI:190135"/>
    </ligand>
</feature>
<feature type="binding site" evidence="2">
    <location>
        <position position="49"/>
    </location>
    <ligand>
        <name>[2Fe-2S] cluster</name>
        <dbReference type="ChEBI" id="CHEBI:190135"/>
    </ligand>
</feature>
<feature type="binding site" evidence="2">
    <location>
        <position position="52"/>
    </location>
    <ligand>
        <name>[2Fe-2S] cluster</name>
        <dbReference type="ChEBI" id="CHEBI:190135"/>
    </ligand>
</feature>
<protein>
    <recommendedName>
        <fullName>Xanthine dehydrogenase iron-sulfur-binding subunit</fullName>
    </recommendedName>
</protein>
<name>XDHC_ECO57</name>
<sequence length="159" mass="16950">MNHSETITIECTINGMPFQLHAVPGTPLSELLREQGLLSVKQGCCVGECGACTVLVDGTAIDSCLYLAAWAEGKEIRTLEGEAKGGKLSHVQQAYAKSGAVQCGFCTPGLIMATTAMLAKPREKPLTITEIRRGLAGNLCRCTGYQMIVNTVLDCEKTK</sequence>
<gene>
    <name type="primary">xdhC</name>
    <name type="ordered locus">Z4207</name>
    <name type="ordered locus">ECs3741</name>
</gene>
<proteinExistence type="inferred from homology"/>
<accession>Q8X6C4</accession>
<dbReference type="EMBL" id="AE005174">
    <property type="protein sequence ID" value="AAG57997.1"/>
    <property type="molecule type" value="Genomic_DNA"/>
</dbReference>
<dbReference type="EMBL" id="BA000007">
    <property type="protein sequence ID" value="BAB37164.1"/>
    <property type="molecule type" value="Genomic_DNA"/>
</dbReference>
<dbReference type="PIR" id="A85942">
    <property type="entry name" value="A85942"/>
</dbReference>
<dbReference type="PIR" id="E91096">
    <property type="entry name" value="E91096"/>
</dbReference>
<dbReference type="RefSeq" id="NP_311768.1">
    <property type="nucleotide sequence ID" value="NC_002695.1"/>
</dbReference>
<dbReference type="RefSeq" id="WP_001016612.1">
    <property type="nucleotide sequence ID" value="NZ_VOAI01000003.1"/>
</dbReference>
<dbReference type="SMR" id="Q8X6C4"/>
<dbReference type="STRING" id="155864.Z4207"/>
<dbReference type="GeneID" id="916430"/>
<dbReference type="KEGG" id="ece:Z4207"/>
<dbReference type="KEGG" id="ecs:ECs_3741"/>
<dbReference type="PATRIC" id="fig|386585.9.peg.3903"/>
<dbReference type="eggNOG" id="COG2080">
    <property type="taxonomic scope" value="Bacteria"/>
</dbReference>
<dbReference type="HOGENOM" id="CLU_052511_3_1_6"/>
<dbReference type="OMA" id="HMNGRAV"/>
<dbReference type="UniPathway" id="UPA00604">
    <property type="reaction ID" value="UER00661"/>
</dbReference>
<dbReference type="Proteomes" id="UP000000558">
    <property type="component" value="Chromosome"/>
</dbReference>
<dbReference type="Proteomes" id="UP000002519">
    <property type="component" value="Chromosome"/>
</dbReference>
<dbReference type="GO" id="GO:0051537">
    <property type="term" value="F:2 iron, 2 sulfur cluster binding"/>
    <property type="evidence" value="ECO:0007669"/>
    <property type="project" value="UniProtKB-KW"/>
</dbReference>
<dbReference type="GO" id="GO:0046872">
    <property type="term" value="F:metal ion binding"/>
    <property type="evidence" value="ECO:0007669"/>
    <property type="project" value="UniProtKB-KW"/>
</dbReference>
<dbReference type="GO" id="GO:0016491">
    <property type="term" value="F:oxidoreductase activity"/>
    <property type="evidence" value="ECO:0007669"/>
    <property type="project" value="InterPro"/>
</dbReference>
<dbReference type="GO" id="GO:0009114">
    <property type="term" value="P:hypoxanthine catabolic process"/>
    <property type="evidence" value="ECO:0007669"/>
    <property type="project" value="UniProtKB-UniPathway"/>
</dbReference>
<dbReference type="GO" id="GO:0006166">
    <property type="term" value="P:purine ribonucleoside salvage"/>
    <property type="evidence" value="ECO:0007669"/>
    <property type="project" value="UniProtKB-KW"/>
</dbReference>
<dbReference type="CDD" id="cd00207">
    <property type="entry name" value="fer2"/>
    <property type="match status" value="1"/>
</dbReference>
<dbReference type="Gene3D" id="3.10.20.30">
    <property type="match status" value="1"/>
</dbReference>
<dbReference type="Gene3D" id="1.10.150.120">
    <property type="entry name" value="[2Fe-2S]-binding domain"/>
    <property type="match status" value="1"/>
</dbReference>
<dbReference type="InterPro" id="IPR002888">
    <property type="entry name" value="2Fe-2S-bd"/>
</dbReference>
<dbReference type="InterPro" id="IPR036884">
    <property type="entry name" value="2Fe-2S-bd_dom_sf"/>
</dbReference>
<dbReference type="InterPro" id="IPR036010">
    <property type="entry name" value="2Fe-2S_ferredoxin-like_sf"/>
</dbReference>
<dbReference type="InterPro" id="IPR001041">
    <property type="entry name" value="2Fe-2S_ferredoxin-type"/>
</dbReference>
<dbReference type="InterPro" id="IPR012675">
    <property type="entry name" value="Beta-grasp_dom_sf"/>
</dbReference>
<dbReference type="InterPro" id="IPR051452">
    <property type="entry name" value="Diverse_Oxidoreductases"/>
</dbReference>
<dbReference type="NCBIfam" id="NF007387">
    <property type="entry name" value="PRK09908.1"/>
    <property type="match status" value="1"/>
</dbReference>
<dbReference type="PANTHER" id="PTHR44379">
    <property type="entry name" value="OXIDOREDUCTASE WITH IRON-SULFUR SUBUNIT"/>
    <property type="match status" value="1"/>
</dbReference>
<dbReference type="PANTHER" id="PTHR44379:SF8">
    <property type="entry name" value="XANTHINE DEHYDROGENASE IRON-SULFUR-BINDING SUBUNIT XDHC-RELATED"/>
    <property type="match status" value="1"/>
</dbReference>
<dbReference type="Pfam" id="PF00111">
    <property type="entry name" value="Fer2"/>
    <property type="match status" value="1"/>
</dbReference>
<dbReference type="Pfam" id="PF01799">
    <property type="entry name" value="Fer2_2"/>
    <property type="match status" value="1"/>
</dbReference>
<dbReference type="SUPFAM" id="SSF54292">
    <property type="entry name" value="2Fe-2S ferredoxin-like"/>
    <property type="match status" value="1"/>
</dbReference>
<dbReference type="SUPFAM" id="SSF47741">
    <property type="entry name" value="CO dehydrogenase ISP C-domain like"/>
    <property type="match status" value="1"/>
</dbReference>
<dbReference type="PROSITE" id="PS51085">
    <property type="entry name" value="2FE2S_FER_2"/>
    <property type="match status" value="1"/>
</dbReference>
<organism>
    <name type="scientific">Escherichia coli O157:H7</name>
    <dbReference type="NCBI Taxonomy" id="83334"/>
    <lineage>
        <taxon>Bacteria</taxon>
        <taxon>Pseudomonadati</taxon>
        <taxon>Pseudomonadota</taxon>
        <taxon>Gammaproteobacteria</taxon>
        <taxon>Enterobacterales</taxon>
        <taxon>Enterobacteriaceae</taxon>
        <taxon>Escherichia</taxon>
    </lineage>
</organism>